<name>RNZ_CHLCV</name>
<feature type="chain" id="PRO_0000155855" description="Ribonuclease Z">
    <location>
        <begin position="1"/>
        <end position="306"/>
    </location>
</feature>
<feature type="active site" description="Proton acceptor" evidence="1">
    <location>
        <position position="67"/>
    </location>
</feature>
<feature type="binding site" evidence="1">
    <location>
        <position position="63"/>
    </location>
    <ligand>
        <name>Zn(2+)</name>
        <dbReference type="ChEBI" id="CHEBI:29105"/>
        <label>1</label>
        <note>catalytic</note>
    </ligand>
</feature>
<feature type="binding site" evidence="1">
    <location>
        <position position="65"/>
    </location>
    <ligand>
        <name>Zn(2+)</name>
        <dbReference type="ChEBI" id="CHEBI:29105"/>
        <label>1</label>
        <note>catalytic</note>
    </ligand>
</feature>
<feature type="binding site" evidence="1">
    <location>
        <position position="67"/>
    </location>
    <ligand>
        <name>Zn(2+)</name>
        <dbReference type="ChEBI" id="CHEBI:29105"/>
        <label>2</label>
        <note>catalytic</note>
    </ligand>
</feature>
<feature type="binding site" evidence="1">
    <location>
        <position position="68"/>
    </location>
    <ligand>
        <name>Zn(2+)</name>
        <dbReference type="ChEBI" id="CHEBI:29105"/>
        <label>2</label>
        <note>catalytic</note>
    </ligand>
</feature>
<feature type="binding site" evidence="1">
    <location>
        <position position="141"/>
    </location>
    <ligand>
        <name>Zn(2+)</name>
        <dbReference type="ChEBI" id="CHEBI:29105"/>
        <label>1</label>
        <note>catalytic</note>
    </ligand>
</feature>
<feature type="binding site" evidence="1">
    <location>
        <position position="208"/>
    </location>
    <ligand>
        <name>Zn(2+)</name>
        <dbReference type="ChEBI" id="CHEBI:29105"/>
        <label>1</label>
        <note>catalytic</note>
    </ligand>
</feature>
<feature type="binding site" evidence="1">
    <location>
        <position position="208"/>
    </location>
    <ligand>
        <name>Zn(2+)</name>
        <dbReference type="ChEBI" id="CHEBI:29105"/>
        <label>2</label>
        <note>catalytic</note>
    </ligand>
</feature>
<feature type="binding site" evidence="1">
    <location>
        <position position="266"/>
    </location>
    <ligand>
        <name>Zn(2+)</name>
        <dbReference type="ChEBI" id="CHEBI:29105"/>
        <label>2</label>
        <note>catalytic</note>
    </ligand>
</feature>
<dbReference type="EC" id="3.1.26.11" evidence="1"/>
<dbReference type="EMBL" id="AE015925">
    <property type="protein sequence ID" value="AAP05066.1"/>
    <property type="molecule type" value="Genomic_DNA"/>
</dbReference>
<dbReference type="RefSeq" id="WP_011006284.1">
    <property type="nucleotide sequence ID" value="NC_003361.3"/>
</dbReference>
<dbReference type="SMR" id="Q823T8"/>
<dbReference type="STRING" id="227941.CCA_00317"/>
<dbReference type="KEGG" id="cca:CCA_00317"/>
<dbReference type="eggNOG" id="COG1234">
    <property type="taxonomic scope" value="Bacteria"/>
</dbReference>
<dbReference type="HOGENOM" id="CLU_031317_2_1_0"/>
<dbReference type="OrthoDB" id="9800940at2"/>
<dbReference type="Proteomes" id="UP000002193">
    <property type="component" value="Chromosome"/>
</dbReference>
<dbReference type="GO" id="GO:0042781">
    <property type="term" value="F:3'-tRNA processing endoribonuclease activity"/>
    <property type="evidence" value="ECO:0007669"/>
    <property type="project" value="UniProtKB-UniRule"/>
</dbReference>
<dbReference type="GO" id="GO:0008270">
    <property type="term" value="F:zinc ion binding"/>
    <property type="evidence" value="ECO:0007669"/>
    <property type="project" value="UniProtKB-UniRule"/>
</dbReference>
<dbReference type="CDD" id="cd07717">
    <property type="entry name" value="RNaseZ_ZiPD-like_MBL-fold"/>
    <property type="match status" value="1"/>
</dbReference>
<dbReference type="Gene3D" id="3.60.15.10">
    <property type="entry name" value="Ribonuclease Z/Hydroxyacylglutathione hydrolase-like"/>
    <property type="match status" value="1"/>
</dbReference>
<dbReference type="HAMAP" id="MF_01818">
    <property type="entry name" value="RNase_Z_BN"/>
    <property type="match status" value="1"/>
</dbReference>
<dbReference type="InterPro" id="IPR001279">
    <property type="entry name" value="Metallo-B-lactamas"/>
</dbReference>
<dbReference type="InterPro" id="IPR036866">
    <property type="entry name" value="RibonucZ/Hydroxyglut_hydro"/>
</dbReference>
<dbReference type="InterPro" id="IPR013471">
    <property type="entry name" value="RNase_Z/BN"/>
</dbReference>
<dbReference type="NCBIfam" id="NF000804">
    <property type="entry name" value="PRK00055.2-1"/>
    <property type="match status" value="1"/>
</dbReference>
<dbReference type="NCBIfam" id="TIGR02651">
    <property type="entry name" value="RNase_Z"/>
    <property type="match status" value="1"/>
</dbReference>
<dbReference type="PANTHER" id="PTHR46018">
    <property type="entry name" value="ZINC PHOSPHODIESTERASE ELAC PROTEIN 1"/>
    <property type="match status" value="1"/>
</dbReference>
<dbReference type="PANTHER" id="PTHR46018:SF2">
    <property type="entry name" value="ZINC PHOSPHODIESTERASE ELAC PROTEIN 1"/>
    <property type="match status" value="1"/>
</dbReference>
<dbReference type="Pfam" id="PF00753">
    <property type="entry name" value="Lactamase_B"/>
    <property type="match status" value="1"/>
</dbReference>
<dbReference type="SUPFAM" id="SSF56281">
    <property type="entry name" value="Metallo-hydrolase/oxidoreductase"/>
    <property type="match status" value="1"/>
</dbReference>
<accession>Q823T8</accession>
<comment type="function">
    <text evidence="1">Zinc phosphodiesterase, which displays some tRNA 3'-processing endonuclease activity. Probably involved in tRNA maturation, by removing a 3'-trailer from precursor tRNA.</text>
</comment>
<comment type="catalytic activity">
    <reaction evidence="1">
        <text>Endonucleolytic cleavage of RNA, removing extra 3' nucleotides from tRNA precursor, generating 3' termini of tRNAs. A 3'-hydroxy group is left at the tRNA terminus and a 5'-phosphoryl group is left at the trailer molecule.</text>
        <dbReference type="EC" id="3.1.26.11"/>
    </reaction>
</comment>
<comment type="cofactor">
    <cofactor evidence="1">
        <name>Zn(2+)</name>
        <dbReference type="ChEBI" id="CHEBI:29105"/>
    </cofactor>
    <text evidence="1">Binds 2 Zn(2+) ions.</text>
</comment>
<comment type="subunit">
    <text evidence="1">Homodimer.</text>
</comment>
<comment type="similarity">
    <text evidence="1">Belongs to the RNase Z family.</text>
</comment>
<proteinExistence type="inferred from homology"/>
<keyword id="KW-0255">Endonuclease</keyword>
<keyword id="KW-0378">Hydrolase</keyword>
<keyword id="KW-0479">Metal-binding</keyword>
<keyword id="KW-0540">Nuclease</keyword>
<keyword id="KW-0819">tRNA processing</keyword>
<keyword id="KW-0862">Zinc</keyword>
<reference key="1">
    <citation type="journal article" date="2003" name="Nucleic Acids Res.">
        <title>Genome sequence of Chlamydophila caviae (Chlamydia psittaci GPIC): examining the role of niche-specific genes in the evolution of the Chlamydiaceae.</title>
        <authorList>
            <person name="Read T.D."/>
            <person name="Myers G.S.A."/>
            <person name="Brunham R.C."/>
            <person name="Nelson W.C."/>
            <person name="Paulsen I.T."/>
            <person name="Heidelberg J.F."/>
            <person name="Holtzapple E.K."/>
            <person name="Khouri H.M."/>
            <person name="Federova N.B."/>
            <person name="Carty H.A."/>
            <person name="Umayam L.A."/>
            <person name="Haft D.H."/>
            <person name="Peterson J.D."/>
            <person name="Beanan M.J."/>
            <person name="White O."/>
            <person name="Salzberg S.L."/>
            <person name="Hsia R.-C."/>
            <person name="McClarty G."/>
            <person name="Rank R.G."/>
            <person name="Bavoil P.M."/>
            <person name="Fraser C.M."/>
        </authorList>
    </citation>
    <scope>NUCLEOTIDE SEQUENCE [LARGE SCALE GENOMIC DNA]</scope>
    <source>
        <strain>ATCC VR-813 / DSM 19441 / 03DC25 / GPIC</strain>
    </source>
</reference>
<sequence>MSCRELIILGCSSQQPTRMRNQGAYLFRWNNEGLLFDPGEGTQRQFIFANIAPTVVSRIFISHFHGDHCLGLGSMLMRLNLDKVTHPIHCYYPASGKKYFDRLRYGTIYHETIHVVEHPVDKEGIVEDFGNFRIEARKLDHLVDTLGWRITEPDTIKFIPEKIKAAGLRGPIMQDLLRDDHVTVNGNTIYLKDVSYVRKGDSIAVIADTLPCQSVVDLAKDARIMLCESTYLEEHLHLAKSHYHMTAKQAATQALAAGAQQLVLTHFSARYLNSKEFELEAGKIFPNVAAAEEFRSYPFPKNPSSK</sequence>
<evidence type="ECO:0000255" key="1">
    <source>
        <dbReference type="HAMAP-Rule" id="MF_01818"/>
    </source>
</evidence>
<gene>
    <name evidence="1" type="primary">rnz</name>
    <name type="ordered locus">CCA_00317</name>
</gene>
<organism>
    <name type="scientific">Chlamydia caviae (strain ATCC VR-813 / DSM 19441 / 03DC25 / GPIC)</name>
    <name type="common">Chlamydophila caviae</name>
    <dbReference type="NCBI Taxonomy" id="227941"/>
    <lineage>
        <taxon>Bacteria</taxon>
        <taxon>Pseudomonadati</taxon>
        <taxon>Chlamydiota</taxon>
        <taxon>Chlamydiia</taxon>
        <taxon>Chlamydiales</taxon>
        <taxon>Chlamydiaceae</taxon>
        <taxon>Chlamydia/Chlamydophila group</taxon>
        <taxon>Chlamydia</taxon>
    </lineage>
</organism>
<protein>
    <recommendedName>
        <fullName evidence="1">Ribonuclease Z</fullName>
        <shortName evidence="1">RNase Z</shortName>
        <ecNumber evidence="1">3.1.26.11</ecNumber>
    </recommendedName>
    <alternativeName>
        <fullName evidence="1">tRNA 3 endonuclease</fullName>
    </alternativeName>
    <alternativeName>
        <fullName evidence="1">tRNase Z</fullName>
    </alternativeName>
</protein>